<organism>
    <name type="scientific">Southern cowpea mosaic virus</name>
    <name type="common">SCPMV</name>
    <name type="synonym">Southern bean mosaic virus (strain cowpea)</name>
    <dbReference type="NCBI Taxonomy" id="196398"/>
    <lineage>
        <taxon>Viruses</taxon>
        <taxon>Riboviria</taxon>
        <taxon>Orthornavirae</taxon>
        <taxon>Pisuviricota</taxon>
        <taxon>Pisoniviricetes</taxon>
        <taxon>Sobelivirales</taxon>
        <taxon>Solemoviridae</taxon>
        <taxon>Sobemovirus</taxon>
    </lineage>
</organism>
<keyword id="KW-0191">Covalent protein-RNA linkage</keyword>
<keyword id="KW-1043">Host membrane</keyword>
<keyword id="KW-0378">Hydrolase</keyword>
<keyword id="KW-0472">Membrane</keyword>
<keyword id="KW-0645">Protease</keyword>
<keyword id="KW-1185">Reference proteome</keyword>
<keyword id="KW-0688">Ribosomal frameshifting</keyword>
<keyword id="KW-0720">Serine protease</keyword>
<keyword id="KW-0808">Transferase</keyword>
<keyword id="KW-0812">Transmembrane</keyword>
<keyword id="KW-1133">Transmembrane helix</keyword>
<dbReference type="EC" id="3.4.21.-"/>
<dbReference type="EMBL" id="M23021">
    <property type="protein sequence ID" value="AAA46566.1"/>
    <property type="status" value="ALT_SEQ"/>
    <property type="molecule type" value="Genomic_RNA"/>
</dbReference>
<dbReference type="PIR" id="C33739">
    <property type="entry name" value="C33739"/>
</dbReference>
<dbReference type="RefSeq" id="NP_042301.2">
    <molecule id="Q83470-1"/>
    <property type="nucleotide sequence ID" value="NC_001625.2"/>
</dbReference>
<dbReference type="RefSeq" id="NP_042302.3">
    <property type="nucleotide sequence ID" value="NC_001625.2"/>
</dbReference>
<dbReference type="SMR" id="Q83470"/>
<dbReference type="KEGG" id="vg:1481842"/>
<dbReference type="KEGG" id="vg:1481843"/>
<dbReference type="Proteomes" id="UP000008033">
    <property type="component" value="Genome"/>
</dbReference>
<dbReference type="GO" id="GO:0033644">
    <property type="term" value="C:host cell membrane"/>
    <property type="evidence" value="ECO:0007669"/>
    <property type="project" value="UniProtKB-SubCell"/>
</dbReference>
<dbReference type="GO" id="GO:0016020">
    <property type="term" value="C:membrane"/>
    <property type="evidence" value="ECO:0007669"/>
    <property type="project" value="UniProtKB-KW"/>
</dbReference>
<dbReference type="GO" id="GO:0004252">
    <property type="term" value="F:serine-type endopeptidase activity"/>
    <property type="evidence" value="ECO:0007669"/>
    <property type="project" value="InterPro"/>
</dbReference>
<dbReference type="GO" id="GO:0016740">
    <property type="term" value="F:transferase activity"/>
    <property type="evidence" value="ECO:0007669"/>
    <property type="project" value="UniProtKB-KW"/>
</dbReference>
<dbReference type="GO" id="GO:0006508">
    <property type="term" value="P:proteolysis"/>
    <property type="evidence" value="ECO:0007669"/>
    <property type="project" value="UniProtKB-KW"/>
</dbReference>
<dbReference type="GO" id="GO:0075523">
    <property type="term" value="P:viral translational frameshifting"/>
    <property type="evidence" value="ECO:0007669"/>
    <property type="project" value="UniProtKB-KW"/>
</dbReference>
<dbReference type="Gene3D" id="2.40.10.10">
    <property type="entry name" value="Trypsin-like serine proteases"/>
    <property type="match status" value="2"/>
</dbReference>
<dbReference type="InterPro" id="IPR009003">
    <property type="entry name" value="Peptidase_S1_PA"/>
</dbReference>
<dbReference type="InterPro" id="IPR043504">
    <property type="entry name" value="Peptidase_S1_PA_chymotrypsin"/>
</dbReference>
<dbReference type="InterPro" id="IPR000382">
    <property type="entry name" value="Peptidase_S39B_luteovirus"/>
</dbReference>
<dbReference type="Pfam" id="PF02122">
    <property type="entry name" value="Peptidase_S39"/>
    <property type="match status" value="1"/>
</dbReference>
<dbReference type="SUPFAM" id="SSF50494">
    <property type="entry name" value="Trypsin-like serine proteases"/>
    <property type="match status" value="1"/>
</dbReference>
<dbReference type="PROSITE" id="PS51868">
    <property type="entry name" value="PEPTIDASE_S39"/>
    <property type="match status" value="1"/>
</dbReference>
<sequence>MYRPSCLSYVLLVANMWSFAVCANAFIYGSYDPSHNIPIVALMTLCATGLWLSTSVVSFGIRYVRVRVSPEKTQNRTIYVSSGLPHFDPVYGVVKKCEPMGGGPAIELQVNPSWIHLLPTSPAINKVEVGQESAILGSTYSVVETGGEPKSLVAVKSGDSTLGFGARVYHEGMDVLMVPHHVWYNDKPHTALAKNGRSVDTEDWEVEAACADPRIDFVLVKVPTAVWAKLAVRSTKVLAPVHGTAVQTFGGQDSKQLFSGLGKAKALDNAWEFTHTAPTAKGWSGTPLYTRDGIVGMHTGYVDIGTSNRAINMHFIMSCLVSKMETLPPELGYREISLEDVGLRSFEFLEVEIENRGKVKLGKREFAWVPKGKAWADMLDDDDLPLPPKMVNGNLVWADAQESFDGALPLNCLRAAGRNVLPPKLNLVTINSPVDPPTKQVACPSEIVDHRLASLEKCLENLLQTLSQPQQKFSQNSLSSGGLKGDQELKLAPCYSKQESLFPPKPRATSSKPITTSSPGTPGRSPLPVSGKELGPSTQSSSKLSRKQRRRRSTKRPVQGSPSPASPPPTRT</sequence>
<comment type="function">
    <molecule>Serine protease</molecule>
    <text>Responsible for cleavages of polyprotein P2A and replicase polyprotein P2AB.</text>
</comment>
<comment type="function">
    <molecule>VPg</molecule>
    <text>Covalently attached to the 5' extremity of the genomic and subgenomic RNAs. It may serve as a primer for the replicase.</text>
</comment>
<comment type="subcellular location">
    <molecule>Polyprotein P2A</molecule>
    <subcellularLocation>
        <location evidence="5">Host membrane</location>
        <topology evidence="5">Multi-pass membrane protein</topology>
    </subcellularLocation>
</comment>
<comment type="subcellular location">
    <molecule>N-terminal protein</molecule>
    <subcellularLocation>
        <location evidence="5">Host membrane</location>
        <topology evidence="5">Multi-pass membrane protein</topology>
    </subcellularLocation>
</comment>
<comment type="alternative products">
    <event type="ribosomal frameshifting"/>
    <isoform>
        <id>Q83470-1</id>
        <name>Polyprotein P2A</name>
        <sequence type="displayed"/>
    </isoform>
    <isoform>
        <id>P21405-1</id>
        <name>Replicase polyprotein P2AB</name>
        <sequence type="external"/>
    </isoform>
</comment>
<comment type="PTM">
    <text evidence="5">The polyprotein is proteolytically cleaved into several chains by the viral protease.</text>
</comment>
<comment type="miscellaneous">
    <molecule>Isoform Polyprotein P2A</molecule>
    <text>Produced by conventional translation.</text>
</comment>
<comment type="sequence caution" evidence="5">
    <conflict type="erroneous gene model prediction">
        <sequence resource="EMBL-CDS" id="AAA46566"/>
    </conflict>
</comment>
<name>P2A_SCPMV</name>
<gene>
    <name type="ORF">ORF2A</name>
</gene>
<organismHost>
    <name type="scientific">Glycine max</name>
    <name type="common">Soybean</name>
    <name type="synonym">Glycine hispida</name>
    <dbReference type="NCBI Taxonomy" id="3847"/>
</organismHost>
<organismHost>
    <name type="scientific">Phaseolus vulgaris</name>
    <name type="common">Kidney bean</name>
    <name type="synonym">French bean</name>
    <dbReference type="NCBI Taxonomy" id="3885"/>
</organismHost>
<organismHost>
    <name type="scientific">Vigna mungo</name>
    <name type="common">Black gram</name>
    <name type="synonym">Phaseolus mungo</name>
    <dbReference type="NCBI Taxonomy" id="3915"/>
</organismHost>
<organismHost>
    <name type="scientific">Vigna unguiculata</name>
    <name type="common">Cowpea</name>
    <dbReference type="NCBI Taxonomy" id="3917"/>
</organismHost>
<evidence type="ECO:0000250" key="1"/>
<evidence type="ECO:0000255" key="2"/>
<evidence type="ECO:0000255" key="3">
    <source>
        <dbReference type="PROSITE-ProRule" id="PRU01216"/>
    </source>
</evidence>
<evidence type="ECO:0000256" key="4">
    <source>
        <dbReference type="SAM" id="MobiDB-lite"/>
    </source>
</evidence>
<evidence type="ECO:0000305" key="5"/>
<protein>
    <recommendedName>
        <fullName>Polyprotein P2A</fullName>
    </recommendedName>
    <component>
        <recommendedName>
            <fullName>N-terminal protein</fullName>
        </recommendedName>
    </component>
    <component>
        <recommendedName>
            <fullName>Serine protease</fullName>
            <ecNumber>3.4.21.-</ecNumber>
        </recommendedName>
    </component>
    <component>
        <recommendedName>
            <fullName>VPg</fullName>
        </recommendedName>
    </component>
    <component>
        <recommendedName>
            <fullName>Putative protein p10</fullName>
        </recommendedName>
    </component>
    <component>
        <recommendedName>
            <fullName>Putative protein p8</fullName>
        </recommendedName>
    </component>
</protein>
<feature type="chain" id="PRO_0000338015" description="Polyprotein P2A">
    <location>
        <begin position="1"/>
        <end position="572"/>
    </location>
</feature>
<feature type="chain" id="PRO_0000409833" description="N-terminal protein" evidence="2">
    <location>
        <begin position="1"/>
        <end position="132"/>
    </location>
</feature>
<feature type="chain" id="PRO_0000409834" description="Serine protease" evidence="2">
    <location>
        <begin position="133"/>
        <end position="325"/>
    </location>
</feature>
<feature type="chain" id="PRO_0000409835" description="VPg" evidence="2">
    <location>
        <begin position="326"/>
        <end position="402"/>
    </location>
</feature>
<feature type="chain" id="PRO_0000409836" description="Putative protein p10" evidence="1">
    <location>
        <begin position="403"/>
        <end position="499"/>
    </location>
</feature>
<feature type="chain" id="PRO_0000409837" description="Putative protein p8" evidence="1">
    <location>
        <begin position="500"/>
        <end position="572"/>
    </location>
</feature>
<feature type="transmembrane region" description="Helical" evidence="2">
    <location>
        <begin position="7"/>
        <end position="27"/>
    </location>
</feature>
<feature type="transmembrane region" description="Helical" evidence="2">
    <location>
        <begin position="37"/>
        <end position="57"/>
    </location>
</feature>
<feature type="transmembrane region" description="Helical" evidence="2">
    <location>
        <begin position="77"/>
        <end position="94"/>
    </location>
</feature>
<feature type="domain" description="Peptidase S39" evidence="3">
    <location>
        <begin position="135"/>
        <end position="330"/>
    </location>
</feature>
<feature type="region of interest" description="Disordered" evidence="4">
    <location>
        <begin position="498"/>
        <end position="572"/>
    </location>
</feature>
<feature type="compositionally biased region" description="Polar residues" evidence="4">
    <location>
        <begin position="508"/>
        <end position="520"/>
    </location>
</feature>
<feature type="compositionally biased region" description="Basic residues" evidence="4">
    <location>
        <begin position="544"/>
        <end position="555"/>
    </location>
</feature>
<feature type="active site" description="For protease activity" evidence="3">
    <location>
        <position position="181"/>
    </location>
</feature>
<feature type="active site" description="For protease activity" evidence="3">
    <location>
        <position position="216"/>
    </location>
</feature>
<feature type="active site" description="For protease activity" evidence="3">
    <location>
        <position position="284"/>
    </location>
</feature>
<feature type="site" description="Cleavage; by viral serine protease" evidence="2">
    <location>
        <begin position="132"/>
        <end position="133"/>
    </location>
</feature>
<feature type="site" description="Cleavage; by viral serine protease" evidence="2">
    <location>
        <begin position="325"/>
        <end position="326"/>
    </location>
</feature>
<feature type="site" description="Cleavage; by viral serine protease" evidence="2">
    <location>
        <begin position="402"/>
        <end position="403"/>
    </location>
</feature>
<feature type="site" description="Cleavage; by viral serine protease" evidence="2">
    <location>
        <begin position="499"/>
        <end position="500"/>
    </location>
</feature>
<reference key="1">
    <citation type="journal article" date="1987" name="Virology">
        <title>Sequence and organization of southern bean mosaic virus genomic RNA.</title>
        <authorList>
            <person name="Wu S."/>
            <person name="Rinehart C.A."/>
            <person name="Kaesberg P."/>
        </authorList>
    </citation>
    <scope>NUCLEOTIDE SEQUENCE [GENOMIC RNA]</scope>
</reference>
<reference key="2">
    <citation type="journal article" date="2007" name="Arch. Virol.">
        <title>Sobemoviruses possess a common CfMV-like genomic organization.</title>
        <authorList>
            <person name="Meier M."/>
            <person name="Truve E."/>
        </authorList>
    </citation>
    <scope>SEQUENCE REVISION TO 555</scope>
    <scope>GENOME REANNOTATION</scope>
    <scope>RIBOSOMAL FRAMESHIFT</scope>
</reference>
<accession>Q83470</accession>
<proteinExistence type="predicted"/>